<feature type="chain" id="PRO_0000186389" description="Dihydrofolate reductase">
    <location>
        <begin position="1"/>
        <end position="159"/>
    </location>
</feature>
<feature type="domain" description="DHFR" evidence="2">
    <location>
        <begin position="1"/>
        <end position="158"/>
    </location>
</feature>
<feature type="binding site" evidence="1">
    <location>
        <position position="5"/>
    </location>
    <ligand>
        <name>substrate</name>
    </ligand>
</feature>
<feature type="binding site" evidence="1">
    <location>
        <position position="7"/>
    </location>
    <ligand>
        <name>NADP(+)</name>
        <dbReference type="ChEBI" id="CHEBI:58349"/>
    </ligand>
</feature>
<feature type="binding site" evidence="1">
    <location>
        <begin position="13"/>
        <end position="19"/>
    </location>
    <ligand>
        <name>NADP(+)</name>
        <dbReference type="ChEBI" id="CHEBI:58349"/>
    </ligand>
</feature>
<feature type="binding site" evidence="1">
    <location>
        <position position="27"/>
    </location>
    <ligand>
        <name>substrate</name>
    </ligand>
</feature>
<feature type="binding site" evidence="1">
    <location>
        <begin position="45"/>
        <end position="46"/>
    </location>
    <ligand>
        <name>NADP(+)</name>
        <dbReference type="ChEBI" id="CHEBI:58349"/>
    </ligand>
</feature>
<feature type="binding site" evidence="1">
    <location>
        <position position="52"/>
    </location>
    <ligand>
        <name>substrate</name>
    </ligand>
</feature>
<feature type="binding site" evidence="1">
    <location>
        <position position="57"/>
    </location>
    <ligand>
        <name>substrate</name>
    </ligand>
</feature>
<feature type="binding site" evidence="1">
    <location>
        <begin position="63"/>
        <end position="64"/>
    </location>
    <ligand>
        <name>NADP(+)</name>
        <dbReference type="ChEBI" id="CHEBI:58349"/>
    </ligand>
</feature>
<feature type="binding site" evidence="1">
    <location>
        <position position="76"/>
    </location>
    <ligand>
        <name>NADP(+)</name>
        <dbReference type="ChEBI" id="CHEBI:58349"/>
    </ligand>
</feature>
<feature type="binding site" evidence="1">
    <location>
        <begin position="95"/>
        <end position="102"/>
    </location>
    <ligand>
        <name>NADP(+)</name>
        <dbReference type="ChEBI" id="CHEBI:58349"/>
    </ligand>
</feature>
<feature type="binding site" evidence="1">
    <location>
        <position position="113"/>
    </location>
    <ligand>
        <name>substrate</name>
    </ligand>
</feature>
<feature type="sequence conflict" description="In Ref. 2; BAA01187." evidence="3" ref="2">
    <original>A</original>
    <variation>R</variation>
    <location>
        <position position="9"/>
    </location>
</feature>
<feature type="sequence conflict" description="In Ref. 2; BAA01187." evidence="3" ref="2">
    <original>DLPA</original>
    <variation>NLNE</variation>
    <location>
        <begin position="23"/>
        <end position="26"/>
    </location>
</feature>
<feature type="sequence conflict" description="In Ref. 2; BAA01187." evidence="3" ref="2">
    <original>K</original>
    <variation>S</variation>
    <location>
        <position position="76"/>
    </location>
</feature>
<feature type="sequence conflict" description="In Ref. 2; BAA01187." evidence="3" ref="2">
    <original>D</original>
    <variation>E</variation>
    <location>
        <position position="79"/>
    </location>
</feature>
<feature type="sequence conflict" description="In Ref. 2; BAA01187." evidence="3" ref="2">
    <original>A</original>
    <variation>V</variation>
    <location>
        <position position="88"/>
    </location>
</feature>
<feature type="sequence conflict" description="In Ref. 2; BAA01187." evidence="3" ref="2">
    <original>EQ</original>
    <variation>DE</variation>
    <location>
        <begin position="101"/>
        <end position="102"/>
    </location>
</feature>
<feature type="sequence conflict" description="In Ref. 2; BAA01187." evidence="3" ref="2">
    <original>H</original>
    <variation>Q</variation>
    <location>
        <position position="108"/>
    </location>
</feature>
<accession>P31074</accession>
<accession>P27498</accession>
<organism>
    <name type="scientific">Klebsiella aerogenes</name>
    <name type="common">Enterobacter aerogenes</name>
    <dbReference type="NCBI Taxonomy" id="548"/>
    <lineage>
        <taxon>Bacteria</taxon>
        <taxon>Pseudomonadati</taxon>
        <taxon>Pseudomonadota</taxon>
        <taxon>Gammaproteobacteria</taxon>
        <taxon>Enterobacterales</taxon>
        <taxon>Enterobacteriaceae</taxon>
        <taxon>Klebsiella/Raoultella group</taxon>
        <taxon>Klebsiella</taxon>
    </lineage>
</organism>
<reference key="1">
    <citation type="journal article" date="1991" name="Mol. Biol. Evol.">
        <title>Temporal and topological clustering of diverged residues among enterobacterial dihydrofolate reductases.</title>
        <authorList>
            <person name="Garvin L.D."/>
            <person name="Hardies S.C."/>
        </authorList>
    </citation>
    <scope>NUCLEOTIDE SEQUENCE [GENOMIC DNA]</scope>
</reference>
<reference key="2">
    <citation type="journal article" date="1992" name="J. Bacteriol.">
        <title>Cloning and nucleotide sequence of a negative regulator gene for Klebsiella aerogenes arylsulfatase synthesis and identification of the gene as folA.</title>
        <authorList>
            <person name="Azakami H."/>
            <person name="Sugino H."/>
            <person name="Murooka Y."/>
        </authorList>
    </citation>
    <scope>NUCLEOTIDE SEQUENCE [GENOMIC DNA]</scope>
    <source>
        <strain>W70</strain>
    </source>
</reference>
<dbReference type="EC" id="1.5.1.3"/>
<dbReference type="EMBL" id="M26022">
    <property type="protein sequence ID" value="AAA24800.1"/>
    <property type="molecule type" value="Genomic_DNA"/>
</dbReference>
<dbReference type="EMBL" id="D10358">
    <property type="protein sequence ID" value="BAA01187.1"/>
    <property type="molecule type" value="Genomic_DNA"/>
</dbReference>
<dbReference type="PIR" id="A39799">
    <property type="entry name" value="A39799"/>
</dbReference>
<dbReference type="RefSeq" id="WP_015368294.1">
    <property type="nucleotide sequence ID" value="NZ_WPHE01000007.1"/>
</dbReference>
<dbReference type="SMR" id="P31074"/>
<dbReference type="STRING" id="548.EAG7_03293"/>
<dbReference type="ChEMBL" id="CHEMBL3853"/>
<dbReference type="GeneID" id="93310381"/>
<dbReference type="OMA" id="RDNQLPW"/>
<dbReference type="UniPathway" id="UPA00077">
    <property type="reaction ID" value="UER00158"/>
</dbReference>
<dbReference type="GO" id="GO:0005829">
    <property type="term" value="C:cytosol"/>
    <property type="evidence" value="ECO:0007669"/>
    <property type="project" value="TreeGrafter"/>
</dbReference>
<dbReference type="GO" id="GO:0004146">
    <property type="term" value="F:dihydrofolate reductase activity"/>
    <property type="evidence" value="ECO:0007669"/>
    <property type="project" value="UniProtKB-EC"/>
</dbReference>
<dbReference type="GO" id="GO:0050661">
    <property type="term" value="F:NADP binding"/>
    <property type="evidence" value="ECO:0007669"/>
    <property type="project" value="InterPro"/>
</dbReference>
<dbReference type="GO" id="GO:0046452">
    <property type="term" value="P:dihydrofolate metabolic process"/>
    <property type="evidence" value="ECO:0007669"/>
    <property type="project" value="TreeGrafter"/>
</dbReference>
<dbReference type="GO" id="GO:0046655">
    <property type="term" value="P:folic acid metabolic process"/>
    <property type="evidence" value="ECO:0007669"/>
    <property type="project" value="TreeGrafter"/>
</dbReference>
<dbReference type="GO" id="GO:0006730">
    <property type="term" value="P:one-carbon metabolic process"/>
    <property type="evidence" value="ECO:0007669"/>
    <property type="project" value="UniProtKB-KW"/>
</dbReference>
<dbReference type="GO" id="GO:0046654">
    <property type="term" value="P:tetrahydrofolate biosynthetic process"/>
    <property type="evidence" value="ECO:0007669"/>
    <property type="project" value="UniProtKB-UniPathway"/>
</dbReference>
<dbReference type="CDD" id="cd00209">
    <property type="entry name" value="DHFR"/>
    <property type="match status" value="1"/>
</dbReference>
<dbReference type="FunFam" id="3.40.430.10:FF:000001">
    <property type="entry name" value="Dihydrofolate reductase"/>
    <property type="match status" value="1"/>
</dbReference>
<dbReference type="Gene3D" id="3.40.430.10">
    <property type="entry name" value="Dihydrofolate Reductase, subunit A"/>
    <property type="match status" value="1"/>
</dbReference>
<dbReference type="InterPro" id="IPR012259">
    <property type="entry name" value="DHFR"/>
</dbReference>
<dbReference type="InterPro" id="IPR024072">
    <property type="entry name" value="DHFR-like_dom_sf"/>
</dbReference>
<dbReference type="InterPro" id="IPR017925">
    <property type="entry name" value="DHFR_CS"/>
</dbReference>
<dbReference type="InterPro" id="IPR001796">
    <property type="entry name" value="DHFR_dom"/>
</dbReference>
<dbReference type="NCBIfam" id="NF008037">
    <property type="entry name" value="PRK10769.1"/>
    <property type="match status" value="1"/>
</dbReference>
<dbReference type="PANTHER" id="PTHR48069">
    <property type="entry name" value="DIHYDROFOLATE REDUCTASE"/>
    <property type="match status" value="1"/>
</dbReference>
<dbReference type="PANTHER" id="PTHR48069:SF3">
    <property type="entry name" value="DIHYDROFOLATE REDUCTASE"/>
    <property type="match status" value="1"/>
</dbReference>
<dbReference type="Pfam" id="PF00186">
    <property type="entry name" value="DHFR_1"/>
    <property type="match status" value="1"/>
</dbReference>
<dbReference type="PIRSF" id="PIRSF000194">
    <property type="entry name" value="DHFR"/>
    <property type="match status" value="1"/>
</dbReference>
<dbReference type="PRINTS" id="PR00070">
    <property type="entry name" value="DHFR"/>
</dbReference>
<dbReference type="SUPFAM" id="SSF53597">
    <property type="entry name" value="Dihydrofolate reductase-like"/>
    <property type="match status" value="1"/>
</dbReference>
<dbReference type="PROSITE" id="PS00075">
    <property type="entry name" value="DHFR_1"/>
    <property type="match status" value="1"/>
</dbReference>
<dbReference type="PROSITE" id="PS51330">
    <property type="entry name" value="DHFR_2"/>
    <property type="match status" value="1"/>
</dbReference>
<name>DYR_KLEAE</name>
<evidence type="ECO:0000250" key="1"/>
<evidence type="ECO:0000255" key="2">
    <source>
        <dbReference type="PROSITE-ProRule" id="PRU00660"/>
    </source>
</evidence>
<evidence type="ECO:0000305" key="3"/>
<protein>
    <recommendedName>
        <fullName>Dihydrofolate reductase</fullName>
        <ecNumber>1.5.1.3</ecNumber>
    </recommendedName>
</protein>
<proteinExistence type="inferred from homology"/>
<sequence length="159" mass="17974">MISLIAALAVDRVIGMENAMPWDLPADLAWFKRNTLNKPVVMGRLTWESIGRPLPGRKNIVISSKPGSDDRVQWVKSVDEAIAACGDAEEIMVIGGGRVYEQFLPKAHKLYLTHIDAEVEGDTHFPDYDPDEWESVFSEFHDADAQNSHSYCFEILERR</sequence>
<comment type="function">
    <text evidence="1">Key enzyme in folate metabolism. Catalyzes an essential reaction for de novo glycine and purine synthesis, and for DNA precursor synthesis (By similarity).</text>
</comment>
<comment type="catalytic activity">
    <reaction evidence="2">
        <text>(6S)-5,6,7,8-tetrahydrofolate + NADP(+) = 7,8-dihydrofolate + NADPH + H(+)</text>
        <dbReference type="Rhea" id="RHEA:15009"/>
        <dbReference type="ChEBI" id="CHEBI:15378"/>
        <dbReference type="ChEBI" id="CHEBI:57451"/>
        <dbReference type="ChEBI" id="CHEBI:57453"/>
        <dbReference type="ChEBI" id="CHEBI:57783"/>
        <dbReference type="ChEBI" id="CHEBI:58349"/>
        <dbReference type="EC" id="1.5.1.3"/>
    </reaction>
</comment>
<comment type="pathway">
    <text>Cofactor biosynthesis; tetrahydrofolate biosynthesis; 5,6,7,8-tetrahydrofolate from 7,8-dihydrofolate: step 1/1.</text>
</comment>
<comment type="similarity">
    <text evidence="3">Belongs to the dihydrofolate reductase family.</text>
</comment>
<gene>
    <name type="primary">folA</name>
    <name type="synonym">atsR</name>
</gene>
<keyword id="KW-0521">NADP</keyword>
<keyword id="KW-0554">One-carbon metabolism</keyword>
<keyword id="KW-0560">Oxidoreductase</keyword>